<keyword id="KW-0226">DNA condensation</keyword>
<keyword id="KW-0238">DNA-binding</keyword>
<keyword id="KW-1185">Reference proteome</keyword>
<feature type="chain" id="PRO_0000104991" description="DNA-binding protein HU">
    <location>
        <begin position="1"/>
        <end position="105"/>
    </location>
</feature>
<organism>
    <name type="scientific">Treponema pallidum (strain Nichols)</name>
    <dbReference type="NCBI Taxonomy" id="243276"/>
    <lineage>
        <taxon>Bacteria</taxon>
        <taxon>Pseudomonadati</taxon>
        <taxon>Spirochaetota</taxon>
        <taxon>Spirochaetia</taxon>
        <taxon>Spirochaetales</taxon>
        <taxon>Treponemataceae</taxon>
        <taxon>Treponema</taxon>
    </lineage>
</organism>
<dbReference type="EMBL" id="AE000520">
    <property type="protein sequence ID" value="AAC65236.1"/>
    <property type="molecule type" value="Genomic_DNA"/>
</dbReference>
<dbReference type="PIR" id="F71348">
    <property type="entry name" value="F71348"/>
</dbReference>
<dbReference type="RefSeq" id="WP_010881700.1">
    <property type="nucleotide sequence ID" value="NC_021490.2"/>
</dbReference>
<dbReference type="SMR" id="O83278"/>
<dbReference type="IntAct" id="O83278">
    <property type="interactions" value="1"/>
</dbReference>
<dbReference type="STRING" id="243276.TP_0251"/>
<dbReference type="EnsemblBacteria" id="AAC65236">
    <property type="protein sequence ID" value="AAC65236"/>
    <property type="gene ID" value="TP_0251"/>
</dbReference>
<dbReference type="KEGG" id="tpa:TP_0251"/>
<dbReference type="KEGG" id="tpw:TPANIC_0251"/>
<dbReference type="eggNOG" id="COG0776">
    <property type="taxonomic scope" value="Bacteria"/>
</dbReference>
<dbReference type="HOGENOM" id="CLU_105066_1_1_12"/>
<dbReference type="OrthoDB" id="9799835at2"/>
<dbReference type="Proteomes" id="UP000000811">
    <property type="component" value="Chromosome"/>
</dbReference>
<dbReference type="GO" id="GO:0005829">
    <property type="term" value="C:cytosol"/>
    <property type="evidence" value="ECO:0007669"/>
    <property type="project" value="TreeGrafter"/>
</dbReference>
<dbReference type="GO" id="GO:0003677">
    <property type="term" value="F:DNA binding"/>
    <property type="evidence" value="ECO:0007669"/>
    <property type="project" value="UniProtKB-KW"/>
</dbReference>
<dbReference type="GO" id="GO:0030527">
    <property type="term" value="F:structural constituent of chromatin"/>
    <property type="evidence" value="ECO:0007669"/>
    <property type="project" value="InterPro"/>
</dbReference>
<dbReference type="GO" id="GO:0030261">
    <property type="term" value="P:chromosome condensation"/>
    <property type="evidence" value="ECO:0007669"/>
    <property type="project" value="UniProtKB-KW"/>
</dbReference>
<dbReference type="CDD" id="cd13832">
    <property type="entry name" value="IHF"/>
    <property type="match status" value="1"/>
</dbReference>
<dbReference type="Gene3D" id="4.10.520.10">
    <property type="entry name" value="IHF-like DNA-binding proteins"/>
    <property type="match status" value="1"/>
</dbReference>
<dbReference type="InterPro" id="IPR000119">
    <property type="entry name" value="Hist_DNA-bd"/>
</dbReference>
<dbReference type="InterPro" id="IPR010992">
    <property type="entry name" value="IHF-like_DNA-bd_dom_sf"/>
</dbReference>
<dbReference type="PANTHER" id="PTHR33175">
    <property type="entry name" value="DNA-BINDING PROTEIN HU"/>
    <property type="match status" value="1"/>
</dbReference>
<dbReference type="PANTHER" id="PTHR33175:SF2">
    <property type="entry name" value="INTEGRATION HOST FACTOR SUBUNIT ALPHA"/>
    <property type="match status" value="1"/>
</dbReference>
<dbReference type="Pfam" id="PF00216">
    <property type="entry name" value="Bac_DNA_binding"/>
    <property type="match status" value="1"/>
</dbReference>
<dbReference type="PRINTS" id="PR01727">
    <property type="entry name" value="DNABINDINGHU"/>
</dbReference>
<dbReference type="SMART" id="SM00411">
    <property type="entry name" value="BHL"/>
    <property type="match status" value="1"/>
</dbReference>
<dbReference type="SUPFAM" id="SSF47729">
    <property type="entry name" value="IHF-like DNA-binding proteins"/>
    <property type="match status" value="1"/>
</dbReference>
<sequence>MKRVRRTRSFVVDALCDEVDLSRRHVARVVDSFVSVVTAALERGETVELRDFGVFESRVRKASVGKSIKTGEVVSIPSHCVVVFRPSKRLKSAVRGYRSGEVGAD</sequence>
<evidence type="ECO:0000250" key="1"/>
<evidence type="ECO:0000305" key="2"/>
<gene>
    <name type="primary">hup</name>
    <name type="ordered locus">TP_0251</name>
</gene>
<proteinExistence type="inferred from homology"/>
<comment type="function">
    <text evidence="1">Histone-like DNA-binding protein which is capable of wrapping DNA to stabilize it, and thus to prevent its denaturation under extreme environmental conditions.</text>
</comment>
<comment type="similarity">
    <text evidence="2">Belongs to the bacterial histone-like protein family.</text>
</comment>
<name>DBH_TREPA</name>
<accession>O83278</accession>
<reference key="1">
    <citation type="journal article" date="1998" name="Science">
        <title>Complete genome sequence of Treponema pallidum, the syphilis spirochete.</title>
        <authorList>
            <person name="Fraser C.M."/>
            <person name="Norris S.J."/>
            <person name="Weinstock G.M."/>
            <person name="White O."/>
            <person name="Sutton G.G."/>
            <person name="Dodson R.J."/>
            <person name="Gwinn M.L."/>
            <person name="Hickey E.K."/>
            <person name="Clayton R.A."/>
            <person name="Ketchum K.A."/>
            <person name="Sodergren E."/>
            <person name="Hardham J.M."/>
            <person name="McLeod M.P."/>
            <person name="Salzberg S.L."/>
            <person name="Peterson J.D."/>
            <person name="Khalak H.G."/>
            <person name="Richardson D.L."/>
            <person name="Howell J.K."/>
            <person name="Chidambaram M."/>
            <person name="Utterback T.R."/>
            <person name="McDonald L.A."/>
            <person name="Artiach P."/>
            <person name="Bowman C."/>
            <person name="Cotton M.D."/>
            <person name="Fujii C."/>
            <person name="Garland S.A."/>
            <person name="Hatch B."/>
            <person name="Horst K."/>
            <person name="Roberts K.M."/>
            <person name="Sandusky M."/>
            <person name="Weidman J.F."/>
            <person name="Smith H.O."/>
            <person name="Venter J.C."/>
        </authorList>
    </citation>
    <scope>NUCLEOTIDE SEQUENCE [LARGE SCALE GENOMIC DNA]</scope>
    <source>
        <strain>Nichols</strain>
    </source>
</reference>
<protein>
    <recommendedName>
        <fullName>DNA-binding protein HU</fullName>
    </recommendedName>
</protein>